<comment type="function">
    <text evidence="1">Catalyzes the ATP-dependent phosphorylation of N-acetyl-L-glutamate.</text>
</comment>
<comment type="catalytic activity">
    <reaction evidence="1">
        <text>N-acetyl-L-glutamate + ATP = N-acetyl-L-glutamyl 5-phosphate + ADP</text>
        <dbReference type="Rhea" id="RHEA:14629"/>
        <dbReference type="ChEBI" id="CHEBI:30616"/>
        <dbReference type="ChEBI" id="CHEBI:44337"/>
        <dbReference type="ChEBI" id="CHEBI:57936"/>
        <dbReference type="ChEBI" id="CHEBI:456216"/>
        <dbReference type="EC" id="2.7.2.8"/>
    </reaction>
</comment>
<comment type="pathway">
    <text evidence="1">Amino-acid biosynthesis; L-arginine biosynthesis; N(2)-acetyl-L-ornithine from L-glutamate: step 2/4.</text>
</comment>
<comment type="subcellular location">
    <subcellularLocation>
        <location evidence="1">Cytoplasm</location>
    </subcellularLocation>
</comment>
<comment type="similarity">
    <text evidence="1">Belongs to the acetylglutamate kinase family. ArgB subfamily.</text>
</comment>
<accession>A8G3L5</accession>
<name>ARGB_PROM2</name>
<proteinExistence type="inferred from homology"/>
<gene>
    <name evidence="1" type="primary">argB</name>
    <name type="ordered locus">P9215_05811</name>
</gene>
<organism>
    <name type="scientific">Prochlorococcus marinus (strain MIT 9215)</name>
    <dbReference type="NCBI Taxonomy" id="93060"/>
    <lineage>
        <taxon>Bacteria</taxon>
        <taxon>Bacillati</taxon>
        <taxon>Cyanobacteriota</taxon>
        <taxon>Cyanophyceae</taxon>
        <taxon>Synechococcales</taxon>
        <taxon>Prochlorococcaceae</taxon>
        <taxon>Prochlorococcus</taxon>
    </lineage>
</organism>
<keyword id="KW-0028">Amino-acid biosynthesis</keyword>
<keyword id="KW-0055">Arginine biosynthesis</keyword>
<keyword id="KW-0067">ATP-binding</keyword>
<keyword id="KW-0963">Cytoplasm</keyword>
<keyword id="KW-0418">Kinase</keyword>
<keyword id="KW-0547">Nucleotide-binding</keyword>
<keyword id="KW-0808">Transferase</keyword>
<reference key="1">
    <citation type="journal article" date="2007" name="PLoS Genet.">
        <title>Patterns and implications of gene gain and loss in the evolution of Prochlorococcus.</title>
        <authorList>
            <person name="Kettler G.C."/>
            <person name="Martiny A.C."/>
            <person name="Huang K."/>
            <person name="Zucker J."/>
            <person name="Coleman M.L."/>
            <person name="Rodrigue S."/>
            <person name="Chen F."/>
            <person name="Lapidus A."/>
            <person name="Ferriera S."/>
            <person name="Johnson J."/>
            <person name="Steglich C."/>
            <person name="Church G.M."/>
            <person name="Richardson P."/>
            <person name="Chisholm S.W."/>
        </authorList>
    </citation>
    <scope>NUCLEOTIDE SEQUENCE [LARGE SCALE GENOMIC DNA]</scope>
    <source>
        <strain>MIT 9215</strain>
    </source>
</reference>
<protein>
    <recommendedName>
        <fullName evidence="1">Acetylglutamate kinase</fullName>
        <ecNumber evidence="1">2.7.2.8</ecNumber>
    </recommendedName>
    <alternativeName>
        <fullName evidence="1">N-acetyl-L-glutamate 5-phosphotransferase</fullName>
    </alternativeName>
    <alternativeName>
        <fullName evidence="1">NAG kinase</fullName>
        <shortName evidence="1">NAGK</shortName>
    </alternativeName>
</protein>
<evidence type="ECO:0000255" key="1">
    <source>
        <dbReference type="HAMAP-Rule" id="MF_00082"/>
    </source>
</evidence>
<dbReference type="EC" id="2.7.2.8" evidence="1"/>
<dbReference type="EMBL" id="CP000825">
    <property type="protein sequence ID" value="ABV50196.1"/>
    <property type="molecule type" value="Genomic_DNA"/>
</dbReference>
<dbReference type="RefSeq" id="WP_012007323.1">
    <property type="nucleotide sequence ID" value="NC_009840.1"/>
</dbReference>
<dbReference type="SMR" id="A8G3L5"/>
<dbReference type="STRING" id="93060.P9215_05811"/>
<dbReference type="KEGG" id="pmh:P9215_05811"/>
<dbReference type="eggNOG" id="COG0548">
    <property type="taxonomic scope" value="Bacteria"/>
</dbReference>
<dbReference type="HOGENOM" id="CLU_053680_0_0_3"/>
<dbReference type="OrthoDB" id="9803155at2"/>
<dbReference type="UniPathway" id="UPA00068">
    <property type="reaction ID" value="UER00107"/>
</dbReference>
<dbReference type="Proteomes" id="UP000002014">
    <property type="component" value="Chromosome"/>
</dbReference>
<dbReference type="GO" id="GO:0005737">
    <property type="term" value="C:cytoplasm"/>
    <property type="evidence" value="ECO:0007669"/>
    <property type="project" value="UniProtKB-SubCell"/>
</dbReference>
<dbReference type="GO" id="GO:0003991">
    <property type="term" value="F:acetylglutamate kinase activity"/>
    <property type="evidence" value="ECO:0007669"/>
    <property type="project" value="UniProtKB-UniRule"/>
</dbReference>
<dbReference type="GO" id="GO:0005524">
    <property type="term" value="F:ATP binding"/>
    <property type="evidence" value="ECO:0007669"/>
    <property type="project" value="UniProtKB-UniRule"/>
</dbReference>
<dbReference type="GO" id="GO:0042450">
    <property type="term" value="P:arginine biosynthetic process via ornithine"/>
    <property type="evidence" value="ECO:0007669"/>
    <property type="project" value="UniProtKB-UniRule"/>
</dbReference>
<dbReference type="GO" id="GO:0006526">
    <property type="term" value="P:L-arginine biosynthetic process"/>
    <property type="evidence" value="ECO:0007669"/>
    <property type="project" value="UniProtKB-UniPathway"/>
</dbReference>
<dbReference type="CDD" id="cd04250">
    <property type="entry name" value="AAK_NAGK-C"/>
    <property type="match status" value="1"/>
</dbReference>
<dbReference type="FunFam" id="3.40.1160.10:FF:000004">
    <property type="entry name" value="Acetylglutamate kinase"/>
    <property type="match status" value="1"/>
</dbReference>
<dbReference type="Gene3D" id="3.40.1160.10">
    <property type="entry name" value="Acetylglutamate kinase-like"/>
    <property type="match status" value="1"/>
</dbReference>
<dbReference type="HAMAP" id="MF_00082">
    <property type="entry name" value="ArgB"/>
    <property type="match status" value="1"/>
</dbReference>
<dbReference type="InterPro" id="IPR036393">
    <property type="entry name" value="AceGlu_kinase-like_sf"/>
</dbReference>
<dbReference type="InterPro" id="IPR004662">
    <property type="entry name" value="AcgluKinase_fam"/>
</dbReference>
<dbReference type="InterPro" id="IPR037528">
    <property type="entry name" value="ArgB"/>
</dbReference>
<dbReference type="InterPro" id="IPR001048">
    <property type="entry name" value="Asp/Glu/Uridylate_kinase"/>
</dbReference>
<dbReference type="InterPro" id="IPR041727">
    <property type="entry name" value="NAGK-C"/>
</dbReference>
<dbReference type="NCBIfam" id="TIGR00761">
    <property type="entry name" value="argB"/>
    <property type="match status" value="1"/>
</dbReference>
<dbReference type="PANTHER" id="PTHR23342">
    <property type="entry name" value="N-ACETYLGLUTAMATE SYNTHASE"/>
    <property type="match status" value="1"/>
</dbReference>
<dbReference type="PANTHER" id="PTHR23342:SF0">
    <property type="entry name" value="N-ACETYLGLUTAMATE SYNTHASE, MITOCHONDRIAL"/>
    <property type="match status" value="1"/>
</dbReference>
<dbReference type="Pfam" id="PF00696">
    <property type="entry name" value="AA_kinase"/>
    <property type="match status" value="1"/>
</dbReference>
<dbReference type="PIRSF" id="PIRSF000728">
    <property type="entry name" value="NAGK"/>
    <property type="match status" value="1"/>
</dbReference>
<dbReference type="SUPFAM" id="SSF53633">
    <property type="entry name" value="Carbamate kinase-like"/>
    <property type="match status" value="1"/>
</dbReference>
<sequence length="283" mass="30600">MNDSQRVSILSEALPYIQSFSGRKIVIKYGGSVMENDNLKNAFFRDIALLSTVGVCPIVIHGGGPEINNWLKKLEISPKFENGLRITDQKTMEIVEMVLMGRVNKQIVKGINKTGSLAVGISGLDGNLIQSRELGDGSHGLVGEVTKINPEILDPLISKGYIPIISSIGSTLEGISHNINADFVAGEIAAAINAEKLILLTDTQGILKEKDNKNSLVEKTNLKEARDFIDKKIVTEGMIPKTECCIRALAQGVKAAHIIDGRIEHSLLLEIFTNSGIGTMIVA</sequence>
<feature type="chain" id="PRO_1000057540" description="Acetylglutamate kinase">
    <location>
        <begin position="1"/>
        <end position="283"/>
    </location>
</feature>
<feature type="binding site" evidence="1">
    <location>
        <begin position="63"/>
        <end position="64"/>
    </location>
    <ligand>
        <name>substrate</name>
    </ligand>
</feature>
<feature type="binding site" evidence="1">
    <location>
        <position position="85"/>
    </location>
    <ligand>
        <name>substrate</name>
    </ligand>
</feature>
<feature type="binding site" evidence="1">
    <location>
        <position position="178"/>
    </location>
    <ligand>
        <name>substrate</name>
    </ligand>
</feature>
<feature type="site" description="Transition state stabilizer" evidence="1">
    <location>
        <position position="28"/>
    </location>
</feature>
<feature type="site" description="Transition state stabilizer" evidence="1">
    <location>
        <position position="241"/>
    </location>
</feature>